<reference key="1">
    <citation type="journal article" date="2002" name="Lancet">
        <title>Genome and virulence determinants of high virulence community-acquired MRSA.</title>
        <authorList>
            <person name="Baba T."/>
            <person name="Takeuchi F."/>
            <person name="Kuroda M."/>
            <person name="Yuzawa H."/>
            <person name="Aoki K."/>
            <person name="Oguchi A."/>
            <person name="Nagai Y."/>
            <person name="Iwama N."/>
            <person name="Asano K."/>
            <person name="Naimi T."/>
            <person name="Kuroda H."/>
            <person name="Cui L."/>
            <person name="Yamamoto K."/>
            <person name="Hiramatsu K."/>
        </authorList>
    </citation>
    <scope>NUCLEOTIDE SEQUENCE [LARGE SCALE GENOMIC DNA]</scope>
    <source>
        <strain>MW2</strain>
    </source>
</reference>
<comment type="function">
    <text evidence="1">Component of the acetyl coenzyme A carboxylase (ACC) complex. First, biotin carboxylase catalyzes the carboxylation of biotin on its carrier protein (BCCP) and then the CO(2) group is transferred by the carboxyltransferase to acetyl-CoA to form malonyl-CoA.</text>
</comment>
<comment type="catalytic activity">
    <reaction evidence="1">
        <text>N(6)-carboxybiotinyl-L-lysyl-[protein] + acetyl-CoA = N(6)-biotinyl-L-lysyl-[protein] + malonyl-CoA</text>
        <dbReference type="Rhea" id="RHEA:54728"/>
        <dbReference type="Rhea" id="RHEA-COMP:10505"/>
        <dbReference type="Rhea" id="RHEA-COMP:10506"/>
        <dbReference type="ChEBI" id="CHEBI:57288"/>
        <dbReference type="ChEBI" id="CHEBI:57384"/>
        <dbReference type="ChEBI" id="CHEBI:83144"/>
        <dbReference type="ChEBI" id="CHEBI:83145"/>
        <dbReference type="EC" id="2.1.3.15"/>
    </reaction>
</comment>
<comment type="pathway">
    <text evidence="1">Lipid metabolism; malonyl-CoA biosynthesis; malonyl-CoA from acetyl-CoA: step 1/1.</text>
</comment>
<comment type="subunit">
    <text evidence="1">Acetyl-CoA carboxylase is a heterohexamer composed of biotin carboxyl carrier protein (AccB), biotin carboxylase (AccC) and two subunits each of ACCase subunit alpha (AccA) and ACCase subunit beta (AccD).</text>
</comment>
<comment type="subcellular location">
    <subcellularLocation>
        <location evidence="1">Cytoplasm</location>
    </subcellularLocation>
</comment>
<comment type="similarity">
    <text evidence="1">Belongs to the AccA family.</text>
</comment>
<gene>
    <name evidence="1" type="primary">accA</name>
    <name type="ordered locus">MW1643</name>
</gene>
<protein>
    <recommendedName>
        <fullName evidence="1">Acetyl-coenzyme A carboxylase carboxyl transferase subunit alpha</fullName>
        <shortName evidence="1">ACCase subunit alpha</shortName>
        <shortName evidence="1">Acetyl-CoA carboxylase carboxyltransferase subunit alpha</shortName>
        <ecNumber evidence="1">2.1.3.15</ecNumber>
    </recommendedName>
</protein>
<feature type="chain" id="PRO_0000223830" description="Acetyl-coenzyme A carboxylase carboxyl transferase subunit alpha">
    <location>
        <begin position="1"/>
        <end position="314"/>
    </location>
</feature>
<feature type="domain" description="CoA carboxyltransferase C-terminal" evidence="2">
    <location>
        <begin position="32"/>
        <end position="289"/>
    </location>
</feature>
<organism>
    <name type="scientific">Staphylococcus aureus (strain MW2)</name>
    <dbReference type="NCBI Taxonomy" id="196620"/>
    <lineage>
        <taxon>Bacteria</taxon>
        <taxon>Bacillati</taxon>
        <taxon>Bacillota</taxon>
        <taxon>Bacilli</taxon>
        <taxon>Bacillales</taxon>
        <taxon>Staphylococcaceae</taxon>
        <taxon>Staphylococcus</taxon>
    </lineage>
</organism>
<name>ACCA_STAAW</name>
<accession>Q8NW60</accession>
<sequence>MLDFEKPLFEIRNKIESLKESQDKNDVDLQEEIDMLEASLERETKKIYTNLKPWDRVQIARLQERPTTLDYIPYIFDSFMELHGDRNFRDDPAMIGGIGFLNGRAVTVIGQQRGKDTKDNIYRNFGMAHPEGYRKALRLMKQAEKFNRPIFTFIDTKGAYPGKAAEERGQSESIATNLIEMASLKVPVIAIVIGEGGSGGALGIGIANKVLMLENSTYSVISPEGAAALLWKDSNLAKIAAETMKITAHDIKQLGIIDDVISEPLGGAHKDIEQQALAIKSAFVAQLDSLESLSRDEIANDRFEKFRNIGSYIE</sequence>
<evidence type="ECO:0000255" key="1">
    <source>
        <dbReference type="HAMAP-Rule" id="MF_00823"/>
    </source>
</evidence>
<evidence type="ECO:0000255" key="2">
    <source>
        <dbReference type="PROSITE-ProRule" id="PRU01137"/>
    </source>
</evidence>
<proteinExistence type="inferred from homology"/>
<keyword id="KW-0067">ATP-binding</keyword>
<keyword id="KW-0963">Cytoplasm</keyword>
<keyword id="KW-0275">Fatty acid biosynthesis</keyword>
<keyword id="KW-0276">Fatty acid metabolism</keyword>
<keyword id="KW-0444">Lipid biosynthesis</keyword>
<keyword id="KW-0443">Lipid metabolism</keyword>
<keyword id="KW-0547">Nucleotide-binding</keyword>
<keyword id="KW-0808">Transferase</keyword>
<dbReference type="EC" id="2.1.3.15" evidence="1"/>
<dbReference type="EMBL" id="BA000033">
    <property type="protein sequence ID" value="BAB95508.1"/>
    <property type="molecule type" value="Genomic_DNA"/>
</dbReference>
<dbReference type="RefSeq" id="WP_000883645.1">
    <property type="nucleotide sequence ID" value="NC_003923.1"/>
</dbReference>
<dbReference type="SMR" id="Q8NW60"/>
<dbReference type="KEGG" id="sam:MW1643"/>
<dbReference type="HOGENOM" id="CLU_015486_0_2_9"/>
<dbReference type="UniPathway" id="UPA00655">
    <property type="reaction ID" value="UER00711"/>
</dbReference>
<dbReference type="GO" id="GO:0009317">
    <property type="term" value="C:acetyl-CoA carboxylase complex"/>
    <property type="evidence" value="ECO:0007669"/>
    <property type="project" value="InterPro"/>
</dbReference>
<dbReference type="GO" id="GO:0003989">
    <property type="term" value="F:acetyl-CoA carboxylase activity"/>
    <property type="evidence" value="ECO:0007669"/>
    <property type="project" value="InterPro"/>
</dbReference>
<dbReference type="GO" id="GO:0005524">
    <property type="term" value="F:ATP binding"/>
    <property type="evidence" value="ECO:0007669"/>
    <property type="project" value="UniProtKB-KW"/>
</dbReference>
<dbReference type="GO" id="GO:0016743">
    <property type="term" value="F:carboxyl- or carbamoyltransferase activity"/>
    <property type="evidence" value="ECO:0007669"/>
    <property type="project" value="UniProtKB-UniRule"/>
</dbReference>
<dbReference type="GO" id="GO:0006633">
    <property type="term" value="P:fatty acid biosynthetic process"/>
    <property type="evidence" value="ECO:0007669"/>
    <property type="project" value="UniProtKB-KW"/>
</dbReference>
<dbReference type="GO" id="GO:2001295">
    <property type="term" value="P:malonyl-CoA biosynthetic process"/>
    <property type="evidence" value="ECO:0007669"/>
    <property type="project" value="UniProtKB-UniRule"/>
</dbReference>
<dbReference type="Gene3D" id="3.90.226.10">
    <property type="entry name" value="2-enoyl-CoA Hydratase, Chain A, domain 1"/>
    <property type="match status" value="1"/>
</dbReference>
<dbReference type="HAMAP" id="MF_00823">
    <property type="entry name" value="AcetylCoA_CT_alpha"/>
    <property type="match status" value="1"/>
</dbReference>
<dbReference type="InterPro" id="IPR001095">
    <property type="entry name" value="Acetyl_CoA_COase_a_su"/>
</dbReference>
<dbReference type="InterPro" id="IPR029045">
    <property type="entry name" value="ClpP/crotonase-like_dom_sf"/>
</dbReference>
<dbReference type="InterPro" id="IPR011763">
    <property type="entry name" value="COA_CT_C"/>
</dbReference>
<dbReference type="NCBIfam" id="TIGR00513">
    <property type="entry name" value="accA"/>
    <property type="match status" value="1"/>
</dbReference>
<dbReference type="NCBIfam" id="NF041504">
    <property type="entry name" value="AccA_sub"/>
    <property type="match status" value="1"/>
</dbReference>
<dbReference type="NCBIfam" id="NF004344">
    <property type="entry name" value="PRK05724.1"/>
    <property type="match status" value="1"/>
</dbReference>
<dbReference type="PANTHER" id="PTHR42853">
    <property type="entry name" value="ACETYL-COENZYME A CARBOXYLASE CARBOXYL TRANSFERASE SUBUNIT ALPHA"/>
    <property type="match status" value="1"/>
</dbReference>
<dbReference type="PANTHER" id="PTHR42853:SF3">
    <property type="entry name" value="ACETYL-COENZYME A CARBOXYLASE CARBOXYL TRANSFERASE SUBUNIT ALPHA, CHLOROPLASTIC"/>
    <property type="match status" value="1"/>
</dbReference>
<dbReference type="Pfam" id="PF03255">
    <property type="entry name" value="ACCA"/>
    <property type="match status" value="1"/>
</dbReference>
<dbReference type="PRINTS" id="PR01069">
    <property type="entry name" value="ACCCTRFRASEA"/>
</dbReference>
<dbReference type="SUPFAM" id="SSF52096">
    <property type="entry name" value="ClpP/crotonase"/>
    <property type="match status" value="1"/>
</dbReference>
<dbReference type="PROSITE" id="PS50989">
    <property type="entry name" value="COA_CT_CTER"/>
    <property type="match status" value="1"/>
</dbReference>